<dbReference type="EMBL" id="X69198">
    <property type="protein sequence ID" value="CAA49104.1"/>
    <property type="molecule type" value="Genomic_DNA"/>
</dbReference>
<dbReference type="EMBL" id="X67118">
    <property type="protein sequence ID" value="CAA47546.1"/>
    <property type="molecule type" value="Genomic_DNA"/>
</dbReference>
<dbReference type="PIR" id="S46845">
    <property type="entry name" value="S46845"/>
</dbReference>
<dbReference type="RefSeq" id="NP_042207.1">
    <property type="nucleotide sequence ID" value="NC_001611.1"/>
</dbReference>
<dbReference type="GeneID" id="1486451"/>
<dbReference type="KEGG" id="vg:1486451"/>
<dbReference type="Proteomes" id="UP000002060">
    <property type="component" value="Segment"/>
</dbReference>
<dbReference type="InterPro" id="IPR007032">
    <property type="entry name" value="Poxvirus_A51"/>
</dbReference>
<dbReference type="Pfam" id="PF04948">
    <property type="entry name" value="Pox_A51"/>
    <property type="match status" value="1"/>
</dbReference>
<keyword id="KW-0244">Early protein</keyword>
<keyword id="KW-1185">Reference proteome</keyword>
<sequence length="334" mass="37642">MDGVIVYCLNALVKHGEEINHIKNDFMIKPCCERVCEKVKNVHIDGQSKNNTVIADLPYLDNAVLDVCKSVYKKNVSRISRFANLIKIDDDDKTPTGVYNYFKPKDAISVIISIGKDKDVCELLIASDKACACIELNSYKVAILPMNVSFFTKGNASLIILLFDFSINAAPLLRSVTDNNVVISRHKRLHGEIPSSNWFKFYISIKSNYCSILYMVVDGSVMYAIADNKTHTIISKNILDNTTINDECRCCYFEPQIKILDRDEMLNGSSCDMNRHCIMMNLPDIGEFGSSILGKYEPDMIKIALSVAGNLIRNQDYIPGRRGYSYYVYGIASR</sequence>
<protein>
    <recommendedName>
        <fullName>Protein OPG181</fullName>
    </recommendedName>
</protein>
<feature type="chain" id="PRO_0000099348" description="Protein OPG181">
    <location>
        <begin position="1"/>
        <end position="334"/>
    </location>
</feature>
<proteinExistence type="evidence at transcript level"/>
<accession>P0DSU3</accession>
<accession>P33858</accession>
<evidence type="ECO:0000305" key="1"/>
<name>PG181_VAR67</name>
<organismHost>
    <name type="scientific">Homo sapiens</name>
    <name type="common">Human</name>
    <dbReference type="NCBI Taxonomy" id="9606"/>
</organismHost>
<gene>
    <name type="primary">OPG181</name>
    <name type="ORF">A51R</name>
    <name type="ORF">J5R</name>
</gene>
<reference key="1">
    <citation type="journal article" date="1991" name="Dokl. Akad. Nauk SSSR">
        <title>Creation of a clone library of fragments from the natural variola virus and study of the structural and functional organization of viral genes from a circle of hosts.</title>
        <authorList>
            <person name="Shchelkunov S.N."/>
            <person name="Marennikova S.S."/>
            <person name="Totmenin A.V."/>
            <person name="Blinov V.M."/>
            <person name="Chizhikov V.E."/>
            <person name="Gutorov V.V."/>
            <person name="Safronov P.F."/>
            <person name="Pozdnyakov S.G."/>
            <person name="Shelukhina E.M."/>
            <person name="Gashnikov P.V."/>
            <person name="Anjaparidze O.G."/>
            <person name="Sandakhchiev L.S."/>
        </authorList>
    </citation>
    <scope>NUCLEOTIDE SEQUENCE [GENOMIC DNA]</scope>
</reference>
<reference key="2">
    <citation type="journal article" date="1993" name="FEBS Lett.">
        <title>Genes of variola and vaccinia viruses necessary to overcome the host protective mechanisms.</title>
        <authorList>
            <person name="Shchelkunov S.N."/>
            <person name="Blinov V.M."/>
            <person name="Sandakhchiev L.S."/>
        </authorList>
    </citation>
    <scope>NUCLEOTIDE SEQUENCE [GENOMIC DNA]</scope>
</reference>
<organism>
    <name type="scientific">Variola virus (isolate Human/India/Ind3/1967)</name>
    <name type="common">VARV</name>
    <name type="synonym">Smallpox virus</name>
    <dbReference type="NCBI Taxonomy" id="587200"/>
    <lineage>
        <taxon>Viruses</taxon>
        <taxon>Varidnaviria</taxon>
        <taxon>Bamfordvirae</taxon>
        <taxon>Nucleocytoviricota</taxon>
        <taxon>Pokkesviricetes</taxon>
        <taxon>Chitovirales</taxon>
        <taxon>Poxviridae</taxon>
        <taxon>Chordopoxvirinae</taxon>
        <taxon>Orthopoxvirus</taxon>
        <taxon>Variola virus</taxon>
    </lineage>
</organism>
<comment type="induction">
    <text>Expressed in the early phase of the viral replicative cycle.</text>
</comment>
<comment type="similarity">
    <text evidence="1">Belongs to the orthopoxvirus OPG181 family.</text>
</comment>